<evidence type="ECO:0000250" key="1"/>
<evidence type="ECO:0000305" key="2"/>
<name>FUR_BACSU</name>
<sequence>MENRIDRIKKQLHSSSYKLTPQREATVRVLLENEEDHLSAEDVYLLVKEKSPEIGLATVYRTLELLTELKVVDKINFGDGVSRYDLRKEGAAHFHHHLVCMECGAVDEIEEDLLEDVEEIIERDWKFKIKDHRLTFHGICHRCNGKETE</sequence>
<keyword id="KW-0963">Cytoplasm</keyword>
<keyword id="KW-0238">DNA-binding</keyword>
<keyword id="KW-0408">Iron</keyword>
<keyword id="KW-0479">Metal-binding</keyword>
<keyword id="KW-1185">Reference proteome</keyword>
<keyword id="KW-0678">Repressor</keyword>
<keyword id="KW-0804">Transcription</keyword>
<keyword id="KW-0805">Transcription regulation</keyword>
<keyword id="KW-0862">Zinc</keyword>
<organism>
    <name type="scientific">Bacillus subtilis (strain 168)</name>
    <dbReference type="NCBI Taxonomy" id="224308"/>
    <lineage>
        <taxon>Bacteria</taxon>
        <taxon>Bacillati</taxon>
        <taxon>Bacillota</taxon>
        <taxon>Bacilli</taxon>
        <taxon>Bacillales</taxon>
        <taxon>Bacillaceae</taxon>
        <taxon>Bacillus</taxon>
    </lineage>
</organism>
<feature type="chain" id="PRO_0000095589" description="Ferric uptake regulation protein">
    <location>
        <begin position="1"/>
        <end position="149"/>
    </location>
</feature>
<feature type="region of interest" description="DNA-binding" evidence="1">
    <location>
        <begin position="6"/>
        <end position="91"/>
    </location>
</feature>
<feature type="region of interest" description="Dimerization" evidence="1">
    <location>
        <begin position="92"/>
        <end position="147"/>
    </location>
</feature>
<feature type="binding site" evidence="1">
    <location>
        <position position="37"/>
    </location>
    <ligand>
        <name>Zn(2+)</name>
        <dbReference type="ChEBI" id="CHEBI:29105"/>
    </ligand>
</feature>
<feature type="binding site" evidence="1">
    <location>
        <position position="85"/>
    </location>
    <ligand>
        <name>Zn(2+)</name>
        <dbReference type="ChEBI" id="CHEBI:29105"/>
    </ligand>
</feature>
<feature type="binding site" evidence="1">
    <location>
        <position position="93"/>
    </location>
    <ligand>
        <name>Fe cation</name>
        <dbReference type="ChEBI" id="CHEBI:24875"/>
    </ligand>
</feature>
<feature type="binding site" evidence="1">
    <location>
        <position position="95"/>
    </location>
    <ligand>
        <name>Fe cation</name>
        <dbReference type="ChEBI" id="CHEBI:24875"/>
    </ligand>
</feature>
<feature type="binding site" evidence="1">
    <location>
        <position position="97"/>
    </location>
    <ligand>
        <name>Zn(2+)</name>
        <dbReference type="ChEBI" id="CHEBI:29105"/>
    </ligand>
</feature>
<feature type="binding site" evidence="1">
    <location>
        <position position="108"/>
    </location>
    <ligand>
        <name>Zn(2+)</name>
        <dbReference type="ChEBI" id="CHEBI:29105"/>
    </ligand>
</feature>
<feature type="binding site" evidence="1">
    <location>
        <position position="115"/>
    </location>
    <ligand>
        <name>Fe cation</name>
        <dbReference type="ChEBI" id="CHEBI:24875"/>
    </ligand>
</feature>
<feature type="binding site" evidence="1">
    <location>
        <position position="132"/>
    </location>
    <ligand>
        <name>Fe cation</name>
        <dbReference type="ChEBI" id="CHEBI:24875"/>
    </ligand>
</feature>
<feature type="sequence conflict" description="In Ref. 1; BAA12648." evidence="2" ref="1">
    <original>C</original>
    <variation>F</variation>
    <location>
        <position position="103"/>
    </location>
</feature>
<feature type="sequence conflict" description="In Ref. 1; BAA12648." evidence="2" ref="1">
    <original>E</original>
    <variation>G</variation>
    <location>
        <position position="111"/>
    </location>
</feature>
<comment type="function">
    <text>Iron uptake repressor. Acts on the transcription of ferri-siderophore uptake genes.</text>
</comment>
<comment type="subunit">
    <text evidence="1">Homodimer.</text>
</comment>
<comment type="subcellular location">
    <subcellularLocation>
        <location evidence="1">Cytoplasm</location>
    </subcellularLocation>
</comment>
<comment type="similarity">
    <text evidence="2">Belongs to the Fur family.</text>
</comment>
<accession>P54574</accession>
<protein>
    <recommendedName>
        <fullName>Ferric uptake regulation protein</fullName>
        <shortName>Ferric uptake regulator</shortName>
    </recommendedName>
</protein>
<reference key="1">
    <citation type="journal article" date="1996" name="Microbiology">
        <title>Systematic sequencing of the 283 kb 210 degrees-232 degrees region of the Bacillus subtilis genome containing the skin element and many sporulation genes.</title>
        <authorList>
            <person name="Mizuno M."/>
            <person name="Masuda S."/>
            <person name="Takemaru K."/>
            <person name="Hosono S."/>
            <person name="Sato T."/>
            <person name="Takeuchi M."/>
            <person name="Kobayashi Y."/>
        </authorList>
    </citation>
    <scope>NUCLEOTIDE SEQUENCE [GENOMIC DNA]</scope>
    <source>
        <strain>168 / JH642</strain>
    </source>
</reference>
<reference key="2">
    <citation type="journal article" date="1997" name="Nature">
        <title>The complete genome sequence of the Gram-positive bacterium Bacillus subtilis.</title>
        <authorList>
            <person name="Kunst F."/>
            <person name="Ogasawara N."/>
            <person name="Moszer I."/>
            <person name="Albertini A.M."/>
            <person name="Alloni G."/>
            <person name="Azevedo V."/>
            <person name="Bertero M.G."/>
            <person name="Bessieres P."/>
            <person name="Bolotin A."/>
            <person name="Borchert S."/>
            <person name="Borriss R."/>
            <person name="Boursier L."/>
            <person name="Brans A."/>
            <person name="Braun M."/>
            <person name="Brignell S.C."/>
            <person name="Bron S."/>
            <person name="Brouillet S."/>
            <person name="Bruschi C.V."/>
            <person name="Caldwell B."/>
            <person name="Capuano V."/>
            <person name="Carter N.M."/>
            <person name="Choi S.-K."/>
            <person name="Codani J.-J."/>
            <person name="Connerton I.F."/>
            <person name="Cummings N.J."/>
            <person name="Daniel R.A."/>
            <person name="Denizot F."/>
            <person name="Devine K.M."/>
            <person name="Duesterhoeft A."/>
            <person name="Ehrlich S.D."/>
            <person name="Emmerson P.T."/>
            <person name="Entian K.-D."/>
            <person name="Errington J."/>
            <person name="Fabret C."/>
            <person name="Ferrari E."/>
            <person name="Foulger D."/>
            <person name="Fritz C."/>
            <person name="Fujita M."/>
            <person name="Fujita Y."/>
            <person name="Fuma S."/>
            <person name="Galizzi A."/>
            <person name="Galleron N."/>
            <person name="Ghim S.-Y."/>
            <person name="Glaser P."/>
            <person name="Goffeau A."/>
            <person name="Golightly E.J."/>
            <person name="Grandi G."/>
            <person name="Guiseppi G."/>
            <person name="Guy B.J."/>
            <person name="Haga K."/>
            <person name="Haiech J."/>
            <person name="Harwood C.R."/>
            <person name="Henaut A."/>
            <person name="Hilbert H."/>
            <person name="Holsappel S."/>
            <person name="Hosono S."/>
            <person name="Hullo M.-F."/>
            <person name="Itaya M."/>
            <person name="Jones L.-M."/>
            <person name="Joris B."/>
            <person name="Karamata D."/>
            <person name="Kasahara Y."/>
            <person name="Klaerr-Blanchard M."/>
            <person name="Klein C."/>
            <person name="Kobayashi Y."/>
            <person name="Koetter P."/>
            <person name="Koningstein G."/>
            <person name="Krogh S."/>
            <person name="Kumano M."/>
            <person name="Kurita K."/>
            <person name="Lapidus A."/>
            <person name="Lardinois S."/>
            <person name="Lauber J."/>
            <person name="Lazarevic V."/>
            <person name="Lee S.-M."/>
            <person name="Levine A."/>
            <person name="Liu H."/>
            <person name="Masuda S."/>
            <person name="Mauel C."/>
            <person name="Medigue C."/>
            <person name="Medina N."/>
            <person name="Mellado R.P."/>
            <person name="Mizuno M."/>
            <person name="Moestl D."/>
            <person name="Nakai S."/>
            <person name="Noback M."/>
            <person name="Noone D."/>
            <person name="O'Reilly M."/>
            <person name="Ogawa K."/>
            <person name="Ogiwara A."/>
            <person name="Oudega B."/>
            <person name="Park S.-H."/>
            <person name="Parro V."/>
            <person name="Pohl T.M."/>
            <person name="Portetelle D."/>
            <person name="Porwollik S."/>
            <person name="Prescott A.M."/>
            <person name="Presecan E."/>
            <person name="Pujic P."/>
            <person name="Purnelle B."/>
            <person name="Rapoport G."/>
            <person name="Rey M."/>
            <person name="Reynolds S."/>
            <person name="Rieger M."/>
            <person name="Rivolta C."/>
            <person name="Rocha E."/>
            <person name="Roche B."/>
            <person name="Rose M."/>
            <person name="Sadaie Y."/>
            <person name="Sato T."/>
            <person name="Scanlan E."/>
            <person name="Schleich S."/>
            <person name="Schroeter R."/>
            <person name="Scoffone F."/>
            <person name="Sekiguchi J."/>
            <person name="Sekowska A."/>
            <person name="Seror S.J."/>
            <person name="Serror P."/>
            <person name="Shin B.-S."/>
            <person name="Soldo B."/>
            <person name="Sorokin A."/>
            <person name="Tacconi E."/>
            <person name="Takagi T."/>
            <person name="Takahashi H."/>
            <person name="Takemaru K."/>
            <person name="Takeuchi M."/>
            <person name="Tamakoshi A."/>
            <person name="Tanaka T."/>
            <person name="Terpstra P."/>
            <person name="Tognoni A."/>
            <person name="Tosato V."/>
            <person name="Uchiyama S."/>
            <person name="Vandenbol M."/>
            <person name="Vannier F."/>
            <person name="Vassarotti A."/>
            <person name="Viari A."/>
            <person name="Wambutt R."/>
            <person name="Wedler E."/>
            <person name="Wedler H."/>
            <person name="Weitzenegger T."/>
            <person name="Winters P."/>
            <person name="Wipat A."/>
            <person name="Yamamoto H."/>
            <person name="Yamane K."/>
            <person name="Yasumoto K."/>
            <person name="Yata K."/>
            <person name="Yoshida K."/>
            <person name="Yoshikawa H.-F."/>
            <person name="Zumstein E."/>
            <person name="Yoshikawa H."/>
            <person name="Danchin A."/>
        </authorList>
    </citation>
    <scope>NUCLEOTIDE SEQUENCE [LARGE SCALE GENOMIC DNA]</scope>
    <source>
        <strain>168</strain>
    </source>
</reference>
<reference key="3">
    <citation type="journal article" date="2009" name="Microbiology">
        <title>From a consortium sequence to a unified sequence: the Bacillus subtilis 168 reference genome a decade later.</title>
        <authorList>
            <person name="Barbe V."/>
            <person name="Cruveiller S."/>
            <person name="Kunst F."/>
            <person name="Lenoble P."/>
            <person name="Meurice G."/>
            <person name="Sekowska A."/>
            <person name="Vallenet D."/>
            <person name="Wang T."/>
            <person name="Moszer I."/>
            <person name="Medigue C."/>
            <person name="Danchin A."/>
        </authorList>
    </citation>
    <scope>SEQUENCE REVISION TO 103 AND 111</scope>
</reference>
<reference key="4">
    <citation type="journal article" date="1998" name="Mol. Microbiol.">
        <title>Bacillus subtilis contains multiple Fur homologues: identification of the iron uptake (Fur) and peroxide regulon (PerR) repressors.</title>
        <authorList>
            <person name="Bsat N."/>
            <person name="Herbig A."/>
            <person name="Casillas-Martinez L."/>
            <person name="Setlow P."/>
            <person name="Helmann J.D."/>
        </authorList>
    </citation>
    <scope>CHARACTERIZATION</scope>
</reference>
<gene>
    <name type="primary">fur</name>
    <name type="synonym">yqkL</name>
    <name type="ordered locus">BSU23520</name>
</gene>
<proteinExistence type="evidence at protein level"/>
<dbReference type="EMBL" id="D84432">
    <property type="protein sequence ID" value="BAA12648.1"/>
    <property type="molecule type" value="Genomic_DNA"/>
</dbReference>
<dbReference type="EMBL" id="AL009126">
    <property type="protein sequence ID" value="CAB14284.2"/>
    <property type="molecule type" value="Genomic_DNA"/>
</dbReference>
<dbReference type="PIR" id="E69967">
    <property type="entry name" value="E69967"/>
</dbReference>
<dbReference type="RefSeq" id="NP_390233.2">
    <property type="nucleotide sequence ID" value="NC_000964.3"/>
</dbReference>
<dbReference type="RefSeq" id="WP_003223972.1">
    <property type="nucleotide sequence ID" value="NZ_OZ025638.1"/>
</dbReference>
<dbReference type="SMR" id="P54574"/>
<dbReference type="FunCoup" id="P54574">
    <property type="interactions" value="210"/>
</dbReference>
<dbReference type="STRING" id="224308.BSU23520"/>
<dbReference type="PaxDb" id="224308-BSU23520"/>
<dbReference type="EnsemblBacteria" id="CAB14284">
    <property type="protein sequence ID" value="CAB14284"/>
    <property type="gene ID" value="BSU_23520"/>
</dbReference>
<dbReference type="GeneID" id="86873106"/>
<dbReference type="GeneID" id="938727"/>
<dbReference type="KEGG" id="bsu:BSU23520"/>
<dbReference type="PATRIC" id="fig|224308.179.peg.2564"/>
<dbReference type="eggNOG" id="COG0735">
    <property type="taxonomic scope" value="Bacteria"/>
</dbReference>
<dbReference type="InParanoid" id="P54574"/>
<dbReference type="OrthoDB" id="8659436at2"/>
<dbReference type="PhylomeDB" id="P54574"/>
<dbReference type="BioCyc" id="BSUB:BSU23520-MONOMER"/>
<dbReference type="PRO" id="PR:P54574"/>
<dbReference type="Proteomes" id="UP000001570">
    <property type="component" value="Chromosome"/>
</dbReference>
<dbReference type="CollecTF" id="EXPREG_00000b40"/>
<dbReference type="GO" id="GO:0005737">
    <property type="term" value="C:cytoplasm"/>
    <property type="evidence" value="ECO:0007669"/>
    <property type="project" value="UniProtKB-SubCell"/>
</dbReference>
<dbReference type="GO" id="GO:0032993">
    <property type="term" value="C:protein-DNA complex"/>
    <property type="evidence" value="ECO:0000353"/>
    <property type="project" value="CollecTF"/>
</dbReference>
<dbReference type="GO" id="GO:0003700">
    <property type="term" value="F:DNA-binding transcription factor activity"/>
    <property type="evidence" value="ECO:0000318"/>
    <property type="project" value="GO_Central"/>
</dbReference>
<dbReference type="GO" id="GO:0001217">
    <property type="term" value="F:DNA-binding transcription repressor activity"/>
    <property type="evidence" value="ECO:0000353"/>
    <property type="project" value="CollecTF"/>
</dbReference>
<dbReference type="GO" id="GO:0000976">
    <property type="term" value="F:transcription cis-regulatory region binding"/>
    <property type="evidence" value="ECO:0000353"/>
    <property type="project" value="CollecTF"/>
</dbReference>
<dbReference type="GO" id="GO:0008270">
    <property type="term" value="F:zinc ion binding"/>
    <property type="evidence" value="ECO:0000318"/>
    <property type="project" value="GO_Central"/>
</dbReference>
<dbReference type="GO" id="GO:0045892">
    <property type="term" value="P:negative regulation of DNA-templated transcription"/>
    <property type="evidence" value="ECO:0000314"/>
    <property type="project" value="CollecTF"/>
</dbReference>
<dbReference type="GO" id="GO:1900376">
    <property type="term" value="P:regulation of secondary metabolite biosynthetic process"/>
    <property type="evidence" value="ECO:0000318"/>
    <property type="project" value="GO_Central"/>
</dbReference>
<dbReference type="CDD" id="cd07153">
    <property type="entry name" value="Fur_like"/>
    <property type="match status" value="1"/>
</dbReference>
<dbReference type="FunFam" id="1.10.10.10:FF:000051">
    <property type="entry name" value="Fur family transcriptional regulator"/>
    <property type="match status" value="1"/>
</dbReference>
<dbReference type="FunFam" id="3.30.1490.190:FF:000004">
    <property type="entry name" value="Transcriptional regulator (Fur family)"/>
    <property type="match status" value="1"/>
</dbReference>
<dbReference type="Gene3D" id="3.30.1490.190">
    <property type="match status" value="1"/>
</dbReference>
<dbReference type="Gene3D" id="1.10.10.10">
    <property type="entry name" value="Winged helix-like DNA-binding domain superfamily/Winged helix DNA-binding domain"/>
    <property type="match status" value="1"/>
</dbReference>
<dbReference type="InterPro" id="IPR002481">
    <property type="entry name" value="FUR"/>
</dbReference>
<dbReference type="InterPro" id="IPR043135">
    <property type="entry name" value="Fur_C"/>
</dbReference>
<dbReference type="InterPro" id="IPR036388">
    <property type="entry name" value="WH-like_DNA-bd_sf"/>
</dbReference>
<dbReference type="InterPro" id="IPR036390">
    <property type="entry name" value="WH_DNA-bd_sf"/>
</dbReference>
<dbReference type="PANTHER" id="PTHR33202:SF7">
    <property type="entry name" value="FERRIC UPTAKE REGULATION PROTEIN"/>
    <property type="match status" value="1"/>
</dbReference>
<dbReference type="PANTHER" id="PTHR33202">
    <property type="entry name" value="ZINC UPTAKE REGULATION PROTEIN"/>
    <property type="match status" value="1"/>
</dbReference>
<dbReference type="Pfam" id="PF01475">
    <property type="entry name" value="FUR"/>
    <property type="match status" value="1"/>
</dbReference>
<dbReference type="SUPFAM" id="SSF46785">
    <property type="entry name" value="Winged helix' DNA-binding domain"/>
    <property type="match status" value="1"/>
</dbReference>